<protein>
    <recommendedName>
        <fullName evidence="2">Chorismate synthase</fullName>
        <shortName evidence="2">CS</shortName>
        <ecNumber evidence="2">4.2.3.5</ecNumber>
    </recommendedName>
    <alternativeName>
        <fullName evidence="2">5-enolpyruvylshikimate-3-phosphate phospholyase</fullName>
    </alternativeName>
</protein>
<sequence>MRYFTAGESHGPRLTAIIEGVPAGLSLSAEDINIELKRRQGGYGRGGRMKIESDQVEITSGVRHGKTIGSPITLNVTNRDFKNWEQIMAAQDVEDKIKKQRRLTKPRPGHADLVGGMKYEFEDLRNVLERSSARETTMRVAVGAVAKKLLHELEIEIANHVVNFGGREITSPENLSVQDIRQTAGLSDLSIFDESQAEELRNYIDQIKKAGDTIGGIIETRVEGVPAGLGSYVQYDRKLDAKIAAAVVSINAFKGVEFGLGFEAGKRPGSQVMDEIIWSEDKGYTRSSNQLGGFEGGMTNGEQVIVRGVMKPIPTLYKPLMSIDIESHEPYKASVERSDPTALPAAGVVMENVVATVVAQEICDKFDSDTMNELRDAVASYKKRLSEY</sequence>
<gene>
    <name evidence="2" type="primary">aroC</name>
    <name type="ordered locus">LL1752</name>
    <name type="ORF">L0059</name>
</gene>
<reference key="1">
    <citation type="journal article" date="2001" name="Genome Res.">
        <title>The complete genome sequence of the lactic acid bacterium Lactococcus lactis ssp. lactis IL1403.</title>
        <authorList>
            <person name="Bolotin A."/>
            <person name="Wincker P."/>
            <person name="Mauger S."/>
            <person name="Jaillon O."/>
            <person name="Malarme K."/>
            <person name="Weissenbach J."/>
            <person name="Ehrlich S.D."/>
            <person name="Sorokin A."/>
        </authorList>
    </citation>
    <scope>NUCLEOTIDE SEQUENCE [LARGE SCALE GENOMIC DNA]</scope>
    <source>
        <strain>IL1403</strain>
    </source>
</reference>
<comment type="function">
    <text evidence="2">Catalyzes the anti-1,4-elimination of the C-3 phosphate and the C-6 proR hydrogen from 5-enolpyruvylshikimate-3-phosphate (EPSP) to yield chorismate, which is the branch point compound that serves as the starting substrate for the three terminal pathways of aromatic amino acid biosynthesis. This reaction introduces a second double bond into the aromatic ring system.</text>
</comment>
<comment type="catalytic activity">
    <reaction evidence="2">
        <text>5-O-(1-carboxyvinyl)-3-phosphoshikimate = chorismate + phosphate</text>
        <dbReference type="Rhea" id="RHEA:21020"/>
        <dbReference type="ChEBI" id="CHEBI:29748"/>
        <dbReference type="ChEBI" id="CHEBI:43474"/>
        <dbReference type="ChEBI" id="CHEBI:57701"/>
        <dbReference type="EC" id="4.2.3.5"/>
    </reaction>
</comment>
<comment type="cofactor">
    <cofactor evidence="2">
        <name>FMNH2</name>
        <dbReference type="ChEBI" id="CHEBI:57618"/>
    </cofactor>
    <text evidence="2">Reduced FMN (FMNH(2)).</text>
</comment>
<comment type="pathway">
    <text evidence="2">Metabolic intermediate biosynthesis; chorismate biosynthesis; chorismate from D-erythrose 4-phosphate and phosphoenolpyruvate: step 7/7.</text>
</comment>
<comment type="subunit">
    <text evidence="1 2">Homotetramer.</text>
</comment>
<comment type="similarity">
    <text evidence="2 3">Belongs to the chorismate synthase family.</text>
</comment>
<organism>
    <name type="scientific">Lactococcus lactis subsp. lactis (strain IL1403)</name>
    <name type="common">Streptococcus lactis</name>
    <dbReference type="NCBI Taxonomy" id="272623"/>
    <lineage>
        <taxon>Bacteria</taxon>
        <taxon>Bacillati</taxon>
        <taxon>Bacillota</taxon>
        <taxon>Bacilli</taxon>
        <taxon>Lactobacillales</taxon>
        <taxon>Streptococcaceae</taxon>
        <taxon>Lactococcus</taxon>
    </lineage>
</organism>
<feature type="chain" id="PRO_0000140599" description="Chorismate synthase">
    <location>
        <begin position="1"/>
        <end position="388"/>
    </location>
</feature>
<feature type="binding site" evidence="2">
    <location>
        <position position="39"/>
    </location>
    <ligand>
        <name>NADP(+)</name>
        <dbReference type="ChEBI" id="CHEBI:58349"/>
    </ligand>
</feature>
<feature type="binding site" evidence="2">
    <location>
        <position position="45"/>
    </location>
    <ligand>
        <name>NADP(+)</name>
        <dbReference type="ChEBI" id="CHEBI:58349"/>
    </ligand>
</feature>
<feature type="binding site" evidence="2">
    <location>
        <begin position="130"/>
        <end position="132"/>
    </location>
    <ligand>
        <name>FMN</name>
        <dbReference type="ChEBI" id="CHEBI:58210"/>
    </ligand>
</feature>
<feature type="binding site" evidence="2">
    <location>
        <begin position="251"/>
        <end position="252"/>
    </location>
    <ligand>
        <name>FMN</name>
        <dbReference type="ChEBI" id="CHEBI:58210"/>
    </ligand>
</feature>
<feature type="binding site" evidence="2">
    <location>
        <position position="296"/>
    </location>
    <ligand>
        <name>FMN</name>
        <dbReference type="ChEBI" id="CHEBI:58210"/>
    </ligand>
</feature>
<feature type="binding site" evidence="2">
    <location>
        <begin position="311"/>
        <end position="315"/>
    </location>
    <ligand>
        <name>FMN</name>
        <dbReference type="ChEBI" id="CHEBI:58210"/>
    </ligand>
</feature>
<feature type="binding site" evidence="2">
    <location>
        <position position="337"/>
    </location>
    <ligand>
        <name>FMN</name>
        <dbReference type="ChEBI" id="CHEBI:58210"/>
    </ligand>
</feature>
<name>AROC_LACLA</name>
<accession>Q9CET2</accession>
<dbReference type="EC" id="4.2.3.5" evidence="2"/>
<dbReference type="EMBL" id="AE005176">
    <property type="protein sequence ID" value="AAK05850.1"/>
    <property type="molecule type" value="Genomic_DNA"/>
</dbReference>
<dbReference type="PIR" id="H86843">
    <property type="entry name" value="H86843"/>
</dbReference>
<dbReference type="RefSeq" id="NP_267908.1">
    <property type="nucleotide sequence ID" value="NC_002662.1"/>
</dbReference>
<dbReference type="RefSeq" id="WP_010906120.1">
    <property type="nucleotide sequence ID" value="NC_002662.1"/>
</dbReference>
<dbReference type="SMR" id="Q9CET2"/>
<dbReference type="PaxDb" id="272623-L0059"/>
<dbReference type="EnsemblBacteria" id="AAK05850">
    <property type="protein sequence ID" value="AAK05850"/>
    <property type="gene ID" value="L0059"/>
</dbReference>
<dbReference type="KEGG" id="lla:L0059"/>
<dbReference type="PATRIC" id="fig|272623.7.peg.1878"/>
<dbReference type="eggNOG" id="COG0082">
    <property type="taxonomic scope" value="Bacteria"/>
</dbReference>
<dbReference type="HOGENOM" id="CLU_034547_2_0_9"/>
<dbReference type="OrthoDB" id="9771806at2"/>
<dbReference type="UniPathway" id="UPA00053">
    <property type="reaction ID" value="UER00090"/>
</dbReference>
<dbReference type="Proteomes" id="UP000002196">
    <property type="component" value="Chromosome"/>
</dbReference>
<dbReference type="GO" id="GO:0005829">
    <property type="term" value="C:cytosol"/>
    <property type="evidence" value="ECO:0007669"/>
    <property type="project" value="TreeGrafter"/>
</dbReference>
<dbReference type="GO" id="GO:0004107">
    <property type="term" value="F:chorismate synthase activity"/>
    <property type="evidence" value="ECO:0007669"/>
    <property type="project" value="UniProtKB-UniRule"/>
</dbReference>
<dbReference type="GO" id="GO:0010181">
    <property type="term" value="F:FMN binding"/>
    <property type="evidence" value="ECO:0007669"/>
    <property type="project" value="TreeGrafter"/>
</dbReference>
<dbReference type="GO" id="GO:0008652">
    <property type="term" value="P:amino acid biosynthetic process"/>
    <property type="evidence" value="ECO:0007669"/>
    <property type="project" value="UniProtKB-KW"/>
</dbReference>
<dbReference type="GO" id="GO:0009073">
    <property type="term" value="P:aromatic amino acid family biosynthetic process"/>
    <property type="evidence" value="ECO:0007669"/>
    <property type="project" value="UniProtKB-KW"/>
</dbReference>
<dbReference type="GO" id="GO:0009423">
    <property type="term" value="P:chorismate biosynthetic process"/>
    <property type="evidence" value="ECO:0007669"/>
    <property type="project" value="UniProtKB-UniRule"/>
</dbReference>
<dbReference type="CDD" id="cd07304">
    <property type="entry name" value="Chorismate_synthase"/>
    <property type="match status" value="1"/>
</dbReference>
<dbReference type="FunFam" id="3.60.150.10:FF:000002">
    <property type="entry name" value="Chorismate synthase"/>
    <property type="match status" value="1"/>
</dbReference>
<dbReference type="Gene3D" id="3.60.150.10">
    <property type="entry name" value="Chorismate synthase AroC"/>
    <property type="match status" value="1"/>
</dbReference>
<dbReference type="HAMAP" id="MF_00300">
    <property type="entry name" value="Chorismate_synth"/>
    <property type="match status" value="1"/>
</dbReference>
<dbReference type="InterPro" id="IPR000453">
    <property type="entry name" value="Chorismate_synth"/>
</dbReference>
<dbReference type="InterPro" id="IPR035904">
    <property type="entry name" value="Chorismate_synth_AroC_sf"/>
</dbReference>
<dbReference type="InterPro" id="IPR020541">
    <property type="entry name" value="Chorismate_synthase_CS"/>
</dbReference>
<dbReference type="NCBIfam" id="TIGR00033">
    <property type="entry name" value="aroC"/>
    <property type="match status" value="1"/>
</dbReference>
<dbReference type="NCBIfam" id="NF003793">
    <property type="entry name" value="PRK05382.1"/>
    <property type="match status" value="1"/>
</dbReference>
<dbReference type="PANTHER" id="PTHR21085">
    <property type="entry name" value="CHORISMATE SYNTHASE"/>
    <property type="match status" value="1"/>
</dbReference>
<dbReference type="PANTHER" id="PTHR21085:SF0">
    <property type="entry name" value="CHORISMATE SYNTHASE"/>
    <property type="match status" value="1"/>
</dbReference>
<dbReference type="Pfam" id="PF01264">
    <property type="entry name" value="Chorismate_synt"/>
    <property type="match status" value="1"/>
</dbReference>
<dbReference type="PIRSF" id="PIRSF001456">
    <property type="entry name" value="Chorismate_synth"/>
    <property type="match status" value="1"/>
</dbReference>
<dbReference type="SUPFAM" id="SSF103263">
    <property type="entry name" value="Chorismate synthase, AroC"/>
    <property type="match status" value="1"/>
</dbReference>
<dbReference type="PROSITE" id="PS00787">
    <property type="entry name" value="CHORISMATE_SYNTHASE_1"/>
    <property type="match status" value="1"/>
</dbReference>
<dbReference type="PROSITE" id="PS00788">
    <property type="entry name" value="CHORISMATE_SYNTHASE_2"/>
    <property type="match status" value="1"/>
</dbReference>
<dbReference type="PROSITE" id="PS00789">
    <property type="entry name" value="CHORISMATE_SYNTHASE_3"/>
    <property type="match status" value="1"/>
</dbReference>
<keyword id="KW-0028">Amino-acid biosynthesis</keyword>
<keyword id="KW-0057">Aromatic amino acid biosynthesis</keyword>
<keyword id="KW-0274">FAD</keyword>
<keyword id="KW-0285">Flavoprotein</keyword>
<keyword id="KW-0288">FMN</keyword>
<keyword id="KW-0456">Lyase</keyword>
<keyword id="KW-0521">NADP</keyword>
<keyword id="KW-1185">Reference proteome</keyword>
<evidence type="ECO:0000250" key="1"/>
<evidence type="ECO:0000255" key="2">
    <source>
        <dbReference type="HAMAP-Rule" id="MF_00300"/>
    </source>
</evidence>
<evidence type="ECO:0000305" key="3"/>
<proteinExistence type="inferred from homology"/>